<evidence type="ECO:0000255" key="1">
    <source>
        <dbReference type="HAMAP-Rule" id="MF_00691"/>
    </source>
</evidence>
<keyword id="KW-0067">ATP-binding</keyword>
<keyword id="KW-0378">Hydrolase</keyword>
<keyword id="KW-0547">Nucleotide-binding</keyword>
<keyword id="KW-1185">Reference proteome</keyword>
<sequence length="247" mass="26127">MTAIDLNADLGEGCDNDEALLALVSSANIACGWHAGDVNTMRQTTAWALRQGVSIGAHPSFPDRENFGRTEMHLPPDEVYAGVLFQIGGLSAIVRAQGGRLAHVKPHGALYNQAARDRPLAMAIARAVRDFDASLAVFGLAGGELVLAARELGLAAKEEVFADRGYNADGTLVKRGTPGALLENEEAALSQTLAMVREQRVQSVDGVWVPIRAQTVCLHGDGAHALAFARRIRDRLGSEGIAVRAGA</sequence>
<organism>
    <name type="scientific">Ralstonia nicotianae (strain ATCC BAA-1114 / GMI1000)</name>
    <name type="common">Ralstonia solanacearum</name>
    <dbReference type="NCBI Taxonomy" id="267608"/>
    <lineage>
        <taxon>Bacteria</taxon>
        <taxon>Pseudomonadati</taxon>
        <taxon>Pseudomonadota</taxon>
        <taxon>Betaproteobacteria</taxon>
        <taxon>Burkholderiales</taxon>
        <taxon>Burkholderiaceae</taxon>
        <taxon>Ralstonia</taxon>
        <taxon>Ralstonia solanacearum species complex</taxon>
    </lineage>
</organism>
<gene>
    <name evidence="1" type="primary">pxpA1</name>
    <name type="ordered locus">RSc2169</name>
    <name type="ORF">RS01430</name>
</gene>
<comment type="function">
    <text evidence="1">Catalyzes the cleavage of 5-oxoproline to form L-glutamate coupled to the hydrolysis of ATP to ADP and inorganic phosphate.</text>
</comment>
<comment type="catalytic activity">
    <reaction evidence="1">
        <text>5-oxo-L-proline + ATP + 2 H2O = L-glutamate + ADP + phosphate + H(+)</text>
        <dbReference type="Rhea" id="RHEA:10348"/>
        <dbReference type="ChEBI" id="CHEBI:15377"/>
        <dbReference type="ChEBI" id="CHEBI:15378"/>
        <dbReference type="ChEBI" id="CHEBI:29985"/>
        <dbReference type="ChEBI" id="CHEBI:30616"/>
        <dbReference type="ChEBI" id="CHEBI:43474"/>
        <dbReference type="ChEBI" id="CHEBI:58402"/>
        <dbReference type="ChEBI" id="CHEBI:456216"/>
        <dbReference type="EC" id="3.5.2.9"/>
    </reaction>
</comment>
<comment type="subunit">
    <text evidence="1">Forms a complex composed of PxpA, PxpB and PxpC.</text>
</comment>
<comment type="similarity">
    <text evidence="1">Belongs to the LamB/PxpA family.</text>
</comment>
<protein>
    <recommendedName>
        <fullName evidence="1">5-oxoprolinase subunit A 1</fullName>
        <shortName evidence="1">5-OPase subunit A 1</shortName>
        <ecNumber evidence="1">3.5.2.9</ecNumber>
    </recommendedName>
    <alternativeName>
        <fullName evidence="1">5-oxoprolinase (ATP-hydrolyzing) subunit A 1</fullName>
    </alternativeName>
</protein>
<name>PXPA1_RALN1</name>
<reference key="1">
    <citation type="journal article" date="2002" name="Nature">
        <title>Genome sequence of the plant pathogen Ralstonia solanacearum.</title>
        <authorList>
            <person name="Salanoubat M."/>
            <person name="Genin S."/>
            <person name="Artiguenave F."/>
            <person name="Gouzy J."/>
            <person name="Mangenot S."/>
            <person name="Arlat M."/>
            <person name="Billault A."/>
            <person name="Brottier P."/>
            <person name="Camus J.-C."/>
            <person name="Cattolico L."/>
            <person name="Chandler M."/>
            <person name="Choisne N."/>
            <person name="Claudel-Renard C."/>
            <person name="Cunnac S."/>
            <person name="Demange N."/>
            <person name="Gaspin C."/>
            <person name="Lavie M."/>
            <person name="Moisan A."/>
            <person name="Robert C."/>
            <person name="Saurin W."/>
            <person name="Schiex T."/>
            <person name="Siguier P."/>
            <person name="Thebault P."/>
            <person name="Whalen M."/>
            <person name="Wincker P."/>
            <person name="Levy M."/>
            <person name="Weissenbach J."/>
            <person name="Boucher C.A."/>
        </authorList>
    </citation>
    <scope>NUCLEOTIDE SEQUENCE [LARGE SCALE GENOMIC DNA]</scope>
    <source>
        <strain>ATCC BAA-1114 / GMI1000</strain>
    </source>
</reference>
<proteinExistence type="inferred from homology"/>
<dbReference type="EC" id="3.5.2.9" evidence="1"/>
<dbReference type="EMBL" id="AL646052">
    <property type="protein sequence ID" value="CAD15876.1"/>
    <property type="molecule type" value="Genomic_DNA"/>
</dbReference>
<dbReference type="RefSeq" id="WP_011002098.1">
    <property type="nucleotide sequence ID" value="NC_003295.1"/>
</dbReference>
<dbReference type="SMR" id="Q8XXE5"/>
<dbReference type="STRING" id="267608.RSc2169"/>
<dbReference type="EnsemblBacteria" id="CAD15876">
    <property type="protein sequence ID" value="CAD15876"/>
    <property type="gene ID" value="RSc2169"/>
</dbReference>
<dbReference type="KEGG" id="rso:RSc2169"/>
<dbReference type="eggNOG" id="COG1540">
    <property type="taxonomic scope" value="Bacteria"/>
</dbReference>
<dbReference type="HOGENOM" id="CLU_069535_0_0_4"/>
<dbReference type="Proteomes" id="UP000001436">
    <property type="component" value="Chromosome"/>
</dbReference>
<dbReference type="GO" id="GO:0017168">
    <property type="term" value="F:5-oxoprolinase (ATP-hydrolyzing) activity"/>
    <property type="evidence" value="ECO:0007669"/>
    <property type="project" value="UniProtKB-UniRule"/>
</dbReference>
<dbReference type="GO" id="GO:0005524">
    <property type="term" value="F:ATP binding"/>
    <property type="evidence" value="ECO:0007669"/>
    <property type="project" value="UniProtKB-UniRule"/>
</dbReference>
<dbReference type="GO" id="GO:0005975">
    <property type="term" value="P:carbohydrate metabolic process"/>
    <property type="evidence" value="ECO:0007669"/>
    <property type="project" value="InterPro"/>
</dbReference>
<dbReference type="CDD" id="cd10800">
    <property type="entry name" value="LamB_YcsF_YbgL_like"/>
    <property type="match status" value="1"/>
</dbReference>
<dbReference type="Gene3D" id="3.20.20.370">
    <property type="entry name" value="Glycoside hydrolase/deacetylase"/>
    <property type="match status" value="1"/>
</dbReference>
<dbReference type="HAMAP" id="MF_00691">
    <property type="entry name" value="PxpA"/>
    <property type="match status" value="1"/>
</dbReference>
<dbReference type="InterPro" id="IPR011330">
    <property type="entry name" value="Glyco_hydro/deAcase_b/a-brl"/>
</dbReference>
<dbReference type="InterPro" id="IPR005501">
    <property type="entry name" value="LamB/YcsF/PxpA-like"/>
</dbReference>
<dbReference type="NCBIfam" id="NF003812">
    <property type="entry name" value="PRK05406.1-1"/>
    <property type="match status" value="1"/>
</dbReference>
<dbReference type="NCBIfam" id="NF003814">
    <property type="entry name" value="PRK05406.1-3"/>
    <property type="match status" value="1"/>
</dbReference>
<dbReference type="NCBIfam" id="NF003815">
    <property type="entry name" value="PRK05406.1-4"/>
    <property type="match status" value="1"/>
</dbReference>
<dbReference type="NCBIfam" id="NF003816">
    <property type="entry name" value="PRK05406.1-5"/>
    <property type="match status" value="1"/>
</dbReference>
<dbReference type="PANTHER" id="PTHR30292:SF0">
    <property type="entry name" value="5-OXOPROLINASE SUBUNIT A"/>
    <property type="match status" value="1"/>
</dbReference>
<dbReference type="PANTHER" id="PTHR30292">
    <property type="entry name" value="UNCHARACTERIZED PROTEIN YBGL-RELATED"/>
    <property type="match status" value="1"/>
</dbReference>
<dbReference type="Pfam" id="PF03746">
    <property type="entry name" value="LamB_YcsF"/>
    <property type="match status" value="1"/>
</dbReference>
<dbReference type="SUPFAM" id="SSF88713">
    <property type="entry name" value="Glycoside hydrolase/deacetylase"/>
    <property type="match status" value="1"/>
</dbReference>
<feature type="chain" id="PRO_0000185034" description="5-oxoprolinase subunit A 1">
    <location>
        <begin position="1"/>
        <end position="247"/>
    </location>
</feature>
<accession>Q8XXE5</accession>